<organism>
    <name type="scientific">Cuscuta exaltata</name>
    <name type="common">Tall dodder</name>
    <dbReference type="NCBI Taxonomy" id="476139"/>
    <lineage>
        <taxon>Eukaryota</taxon>
        <taxon>Viridiplantae</taxon>
        <taxon>Streptophyta</taxon>
        <taxon>Embryophyta</taxon>
        <taxon>Tracheophyta</taxon>
        <taxon>Spermatophyta</taxon>
        <taxon>Magnoliopsida</taxon>
        <taxon>eudicotyledons</taxon>
        <taxon>Gunneridae</taxon>
        <taxon>Pentapetalae</taxon>
        <taxon>asterids</taxon>
        <taxon>lamiids</taxon>
        <taxon>Solanales</taxon>
        <taxon>Convolvulaceae</taxon>
        <taxon>Cuscuteae</taxon>
        <taxon>Cuscuta</taxon>
        <taxon>Cuscuta subgen. Monogynella</taxon>
    </lineage>
</organism>
<evidence type="ECO:0000255" key="1">
    <source>
        <dbReference type="HAMAP-Rule" id="MF_00531"/>
    </source>
</evidence>
<evidence type="ECO:0000305" key="2"/>
<keyword id="KW-0934">Plastid</keyword>
<keyword id="KW-0687">Ribonucleoprotein</keyword>
<keyword id="KW-0689">Ribosomal protein</keyword>
<keyword id="KW-0694">RNA-binding</keyword>
<keyword id="KW-0699">rRNA-binding</keyword>
<name>RR19_CUSEX</name>
<reference key="1">
    <citation type="journal article" date="2007" name="BMC Plant Biol.">
        <title>Complete plastid genome sequences suggest strong selection for retention of photosynthetic genes in the parasitic plant genus Cuscuta.</title>
        <authorList>
            <person name="McNeal J.R."/>
            <person name="Kuehl J.V."/>
            <person name="Boore J.L."/>
            <person name="dePamphilis C.W."/>
        </authorList>
    </citation>
    <scope>NUCLEOTIDE SEQUENCE [LARGE SCALE GENOMIC DNA]</scope>
</reference>
<protein>
    <recommendedName>
        <fullName evidence="1">Small ribosomal subunit protein uS19c</fullName>
    </recommendedName>
    <alternativeName>
        <fullName evidence="2">30S ribosomal protein S19, plastid</fullName>
    </alternativeName>
</protein>
<feature type="chain" id="PRO_0000354346" description="Small ribosomal subunit protein uS19c">
    <location>
        <begin position="1"/>
        <end position="92"/>
    </location>
</feature>
<proteinExistence type="inferred from homology"/>
<geneLocation type="plastid"/>
<comment type="function">
    <text evidence="1">Protein S19 forms a complex with S13 that binds strongly to the 16S ribosomal RNA.</text>
</comment>
<comment type="subcellular location">
    <subcellularLocation>
        <location>Plastid</location>
    </subcellularLocation>
</comment>
<comment type="similarity">
    <text evidence="1">Belongs to the universal ribosomal protein uS19 family.</text>
</comment>
<comment type="caution">
    <text evidence="2">Young tissue from this organism is photosynthetic and contains some thylakoids, although the photosynthetic activity does not exceed the light compensation point.</text>
</comment>
<dbReference type="EMBL" id="EU189132">
    <property type="protein sequence ID" value="ABW83732.1"/>
    <property type="molecule type" value="Genomic_DNA"/>
</dbReference>
<dbReference type="RefSeq" id="YP_001542568.1">
    <property type="nucleotide sequence ID" value="NC_009963.1"/>
</dbReference>
<dbReference type="SMR" id="A8W3G1"/>
<dbReference type="GeneID" id="5729607"/>
<dbReference type="GO" id="GO:0005763">
    <property type="term" value="C:mitochondrial small ribosomal subunit"/>
    <property type="evidence" value="ECO:0007669"/>
    <property type="project" value="TreeGrafter"/>
</dbReference>
<dbReference type="GO" id="GO:0009536">
    <property type="term" value="C:plastid"/>
    <property type="evidence" value="ECO:0007669"/>
    <property type="project" value="UniProtKB-SubCell"/>
</dbReference>
<dbReference type="GO" id="GO:0019843">
    <property type="term" value="F:rRNA binding"/>
    <property type="evidence" value="ECO:0007669"/>
    <property type="project" value="UniProtKB-KW"/>
</dbReference>
<dbReference type="GO" id="GO:0003735">
    <property type="term" value="F:structural constituent of ribosome"/>
    <property type="evidence" value="ECO:0007669"/>
    <property type="project" value="InterPro"/>
</dbReference>
<dbReference type="GO" id="GO:0000028">
    <property type="term" value="P:ribosomal small subunit assembly"/>
    <property type="evidence" value="ECO:0007669"/>
    <property type="project" value="TreeGrafter"/>
</dbReference>
<dbReference type="GO" id="GO:0006412">
    <property type="term" value="P:translation"/>
    <property type="evidence" value="ECO:0007669"/>
    <property type="project" value="InterPro"/>
</dbReference>
<dbReference type="FunFam" id="3.30.860.10:FF:000001">
    <property type="entry name" value="30S ribosomal protein S19"/>
    <property type="match status" value="1"/>
</dbReference>
<dbReference type="Gene3D" id="3.30.860.10">
    <property type="entry name" value="30s Ribosomal Protein S19, Chain A"/>
    <property type="match status" value="1"/>
</dbReference>
<dbReference type="HAMAP" id="MF_00531">
    <property type="entry name" value="Ribosomal_uS19"/>
    <property type="match status" value="1"/>
</dbReference>
<dbReference type="InterPro" id="IPR002222">
    <property type="entry name" value="Ribosomal_uS19"/>
</dbReference>
<dbReference type="InterPro" id="IPR005732">
    <property type="entry name" value="Ribosomal_uS19_bac-type"/>
</dbReference>
<dbReference type="InterPro" id="IPR020934">
    <property type="entry name" value="Ribosomal_uS19_CS"/>
</dbReference>
<dbReference type="InterPro" id="IPR023575">
    <property type="entry name" value="Ribosomal_uS19_SF"/>
</dbReference>
<dbReference type="NCBIfam" id="TIGR01050">
    <property type="entry name" value="rpsS_bact"/>
    <property type="match status" value="1"/>
</dbReference>
<dbReference type="PANTHER" id="PTHR11880">
    <property type="entry name" value="RIBOSOMAL PROTEIN S19P FAMILY MEMBER"/>
    <property type="match status" value="1"/>
</dbReference>
<dbReference type="PANTHER" id="PTHR11880:SF8">
    <property type="entry name" value="SMALL RIBOSOMAL SUBUNIT PROTEIN US19M"/>
    <property type="match status" value="1"/>
</dbReference>
<dbReference type="Pfam" id="PF00203">
    <property type="entry name" value="Ribosomal_S19"/>
    <property type="match status" value="1"/>
</dbReference>
<dbReference type="PIRSF" id="PIRSF002144">
    <property type="entry name" value="Ribosomal_S19"/>
    <property type="match status" value="1"/>
</dbReference>
<dbReference type="PRINTS" id="PR00975">
    <property type="entry name" value="RIBOSOMALS19"/>
</dbReference>
<dbReference type="SUPFAM" id="SSF54570">
    <property type="entry name" value="Ribosomal protein S19"/>
    <property type="match status" value="1"/>
</dbReference>
<dbReference type="PROSITE" id="PS00323">
    <property type="entry name" value="RIBOSOMAL_S19"/>
    <property type="match status" value="1"/>
</dbReference>
<accession>A8W3G1</accession>
<sequence length="92" mass="10526">MARSLKKNPFVADNLFKKIDKLNIKAEKEIIITWSRGSTIIPIMVGHTIAIHTGKEHLPIYIMDHMVGHKLGEFASTFNFRGHAKSDNRSRR</sequence>
<gene>
    <name evidence="1" type="primary">rps19</name>
</gene>